<organism>
    <name type="scientific">Escherichia coli (strain K12)</name>
    <dbReference type="NCBI Taxonomy" id="83333"/>
    <lineage>
        <taxon>Bacteria</taxon>
        <taxon>Pseudomonadati</taxon>
        <taxon>Pseudomonadota</taxon>
        <taxon>Gammaproteobacteria</taxon>
        <taxon>Enterobacterales</taxon>
        <taxon>Enterobacteriaceae</taxon>
        <taxon>Escherichia</taxon>
    </lineage>
</organism>
<evidence type="ECO:0000255" key="1"/>
<evidence type="ECO:0000305" key="2"/>
<gene>
    <name type="primary">ykfB</name>
    <name type="ordered locus">b0250</name>
    <name type="ordered locus">JW0239</name>
</gene>
<feature type="signal peptide" evidence="1">
    <location>
        <begin position="1"/>
        <end position="23"/>
    </location>
</feature>
<feature type="chain" id="PRO_0000013786" description="Uncharacterized protein YkfB">
    <location>
        <begin position="24"/>
        <end position="155"/>
    </location>
</feature>
<dbReference type="EMBL" id="U70214">
    <property type="protein sequence ID" value="AAB08669.1"/>
    <property type="molecule type" value="Genomic_DNA"/>
</dbReference>
<dbReference type="EMBL" id="U00096">
    <property type="protein sequence ID" value="AAC73353.1"/>
    <property type="molecule type" value="Genomic_DNA"/>
</dbReference>
<dbReference type="EMBL" id="AP009048">
    <property type="protein sequence ID" value="BAA77919.1"/>
    <property type="molecule type" value="Genomic_DNA"/>
</dbReference>
<dbReference type="PIR" id="B64750">
    <property type="entry name" value="B64750"/>
</dbReference>
<dbReference type="RefSeq" id="NP_414784.1">
    <property type="nucleotide sequence ID" value="NC_000913.3"/>
</dbReference>
<dbReference type="RefSeq" id="WP_001547765.1">
    <property type="nucleotide sequence ID" value="NZ_LN832404.1"/>
</dbReference>
<dbReference type="BioGRID" id="4263171">
    <property type="interactions" value="10"/>
</dbReference>
<dbReference type="FunCoup" id="P77162">
    <property type="interactions" value="1"/>
</dbReference>
<dbReference type="STRING" id="511145.b0250"/>
<dbReference type="jPOST" id="P77162"/>
<dbReference type="PaxDb" id="511145-b0250"/>
<dbReference type="EnsemblBacteria" id="AAC73353">
    <property type="protein sequence ID" value="AAC73353"/>
    <property type="gene ID" value="b0250"/>
</dbReference>
<dbReference type="GeneID" id="93197820"/>
<dbReference type="GeneID" id="946846"/>
<dbReference type="KEGG" id="ecj:JW0239"/>
<dbReference type="KEGG" id="eco:b0250"/>
<dbReference type="KEGG" id="ecoc:C3026_01190"/>
<dbReference type="KEGG" id="ecoc:C3026_23925"/>
<dbReference type="PATRIC" id="fig|511145.12.peg.252"/>
<dbReference type="EchoBASE" id="EB3318"/>
<dbReference type="eggNOG" id="ENOG5030VQ4">
    <property type="taxonomic scope" value="Bacteria"/>
</dbReference>
<dbReference type="HOGENOM" id="CLU_141565_0_0_6"/>
<dbReference type="InParanoid" id="P77162"/>
<dbReference type="OrthoDB" id="6688707at2"/>
<dbReference type="BioCyc" id="EcoCyc:G6125-MONOMER"/>
<dbReference type="PRO" id="PR:P77162"/>
<dbReference type="Proteomes" id="UP000000625">
    <property type="component" value="Chromosome"/>
</dbReference>
<protein>
    <recommendedName>
        <fullName>Uncharacterized protein YkfB</fullName>
    </recommendedName>
</protein>
<keyword id="KW-1185">Reference proteome</keyword>
<keyword id="KW-0732">Signal</keyword>
<accession>P77162</accession>
<name>YKFB_ECOLI</name>
<reference key="1">
    <citation type="submission" date="1996-02" db="EMBL/GenBank/DDBJ databases">
        <title>Systematic sequencing of the Escherichia coli genome: analysis of the 4.0 - 6.0 min (189,987 - 281,416bp) region.</title>
        <authorList>
            <person name="Takemoto K."/>
            <person name="Mori H."/>
            <person name="Murayama N."/>
            <person name="Kataoka K."/>
            <person name="Yano M."/>
            <person name="Itoh T."/>
            <person name="Yamamoto Y."/>
            <person name="Inokuchi H."/>
            <person name="Miki T."/>
            <person name="Hatada E."/>
            <person name="Fukuda R."/>
            <person name="Ichihara S."/>
            <person name="Mizuno T."/>
            <person name="Makino K."/>
            <person name="Nakata A."/>
            <person name="Yura T."/>
            <person name="Sampei G."/>
            <person name="Mizobuchi K."/>
        </authorList>
    </citation>
    <scope>NUCLEOTIDE SEQUENCE [LARGE SCALE GENOMIC DNA]</scope>
    <source>
        <strain>K12 / W3110 / ATCC 27325 / DSM 5911</strain>
    </source>
</reference>
<reference key="2">
    <citation type="submission" date="1997-01" db="EMBL/GenBank/DDBJ databases">
        <title>Sequence of minutes 4-25 of Escherichia coli.</title>
        <authorList>
            <person name="Chung E."/>
            <person name="Allen E."/>
            <person name="Araujo R."/>
            <person name="Aparicio A.M."/>
            <person name="Davis K."/>
            <person name="Duncan M."/>
            <person name="Federspiel N."/>
            <person name="Hyman R."/>
            <person name="Kalman S."/>
            <person name="Komp C."/>
            <person name="Kurdi O."/>
            <person name="Lew H."/>
            <person name="Lin D."/>
            <person name="Namath A."/>
            <person name="Oefner P."/>
            <person name="Roberts D."/>
            <person name="Schramm S."/>
            <person name="Davis R.W."/>
        </authorList>
    </citation>
    <scope>NUCLEOTIDE SEQUENCE [LARGE SCALE GENOMIC DNA]</scope>
    <source>
        <strain>K12 / MG1655 / ATCC 47076</strain>
    </source>
</reference>
<reference key="3">
    <citation type="journal article" date="1997" name="Science">
        <title>The complete genome sequence of Escherichia coli K-12.</title>
        <authorList>
            <person name="Blattner F.R."/>
            <person name="Plunkett G. III"/>
            <person name="Bloch C.A."/>
            <person name="Perna N.T."/>
            <person name="Burland V."/>
            <person name="Riley M."/>
            <person name="Collado-Vides J."/>
            <person name="Glasner J.D."/>
            <person name="Rode C.K."/>
            <person name="Mayhew G.F."/>
            <person name="Gregor J."/>
            <person name="Davis N.W."/>
            <person name="Kirkpatrick H.A."/>
            <person name="Goeden M.A."/>
            <person name="Rose D.J."/>
            <person name="Mau B."/>
            <person name="Shao Y."/>
        </authorList>
    </citation>
    <scope>NUCLEOTIDE SEQUENCE [LARGE SCALE GENOMIC DNA]</scope>
    <source>
        <strain>K12 / MG1655 / ATCC 47076</strain>
    </source>
</reference>
<reference key="4">
    <citation type="journal article" date="2006" name="Mol. Syst. Biol.">
        <title>Highly accurate genome sequences of Escherichia coli K-12 strains MG1655 and W3110.</title>
        <authorList>
            <person name="Hayashi K."/>
            <person name="Morooka N."/>
            <person name="Yamamoto Y."/>
            <person name="Fujita K."/>
            <person name="Isono K."/>
            <person name="Choi S."/>
            <person name="Ohtsubo E."/>
            <person name="Baba T."/>
            <person name="Wanner B.L."/>
            <person name="Mori H."/>
            <person name="Horiuchi T."/>
        </authorList>
    </citation>
    <scope>NUCLEOTIDE SEQUENCE [LARGE SCALE GENOMIC DNA]</scope>
    <source>
        <strain>K12 / W3110 / ATCC 27325 / DSM 5911</strain>
    </source>
</reference>
<comment type="similarity">
    <text evidence="2">To E.coli YfjT.</text>
</comment>
<proteinExistence type="inferred from homology"/>
<sequence length="155" mass="17026">MTILSLSRFMLAGVLLASFNASAIPGFWQQGYGQGNTEYSVTEASGKTFTINCTGNPDQNGFYQHSVFLTLADDKMVSSHDDDTTITVVMDHQQYIIPSSLGWRNGDNAWFDFISNISEAGQFDVYVNDHKAGTFTADRKNAEKVLSTLGDCSND</sequence>